<keyword id="KW-0489">Methyltransferase</keyword>
<keyword id="KW-0949">S-adenosyl-L-methionine</keyword>
<keyword id="KW-0808">Transferase</keyword>
<keyword id="KW-0819">tRNA processing</keyword>
<evidence type="ECO:0000255" key="1">
    <source>
        <dbReference type="HAMAP-Rule" id="MF_01011"/>
    </source>
</evidence>
<feature type="chain" id="PRO_0000281443" description="tRNA/tmRNA (uracil-C(5))-methyltransferase">
    <location>
        <begin position="1"/>
        <end position="366"/>
    </location>
</feature>
<feature type="active site" description="Nucleophile" evidence="1">
    <location>
        <position position="324"/>
    </location>
</feature>
<feature type="active site" description="Proton acceptor" evidence="1">
    <location>
        <position position="358"/>
    </location>
</feature>
<feature type="binding site" evidence="1">
    <location>
        <position position="190"/>
    </location>
    <ligand>
        <name>S-adenosyl-L-methionine</name>
        <dbReference type="ChEBI" id="CHEBI:59789"/>
    </ligand>
</feature>
<feature type="binding site" evidence="1">
    <location>
        <position position="218"/>
    </location>
    <ligand>
        <name>S-adenosyl-L-methionine</name>
        <dbReference type="ChEBI" id="CHEBI:59789"/>
    </ligand>
</feature>
<feature type="binding site" evidence="1">
    <location>
        <position position="223"/>
    </location>
    <ligand>
        <name>S-adenosyl-L-methionine</name>
        <dbReference type="ChEBI" id="CHEBI:59789"/>
    </ligand>
</feature>
<feature type="binding site" evidence="1">
    <location>
        <position position="239"/>
    </location>
    <ligand>
        <name>S-adenosyl-L-methionine</name>
        <dbReference type="ChEBI" id="CHEBI:59789"/>
    </ligand>
</feature>
<feature type="binding site" evidence="1">
    <location>
        <position position="299"/>
    </location>
    <ligand>
        <name>S-adenosyl-L-methionine</name>
        <dbReference type="ChEBI" id="CHEBI:59789"/>
    </ligand>
</feature>
<accession>Q0TA91</accession>
<dbReference type="EC" id="2.1.1.-" evidence="1"/>
<dbReference type="EC" id="2.1.1.35" evidence="1"/>
<dbReference type="EMBL" id="CP000247">
    <property type="protein sequence ID" value="ABG72138.1"/>
    <property type="molecule type" value="Genomic_DNA"/>
</dbReference>
<dbReference type="RefSeq" id="WP_000187001.1">
    <property type="nucleotide sequence ID" value="NC_008253.1"/>
</dbReference>
<dbReference type="SMR" id="Q0TA91"/>
<dbReference type="KEGG" id="ecp:ECP_4182"/>
<dbReference type="HOGENOM" id="CLU_043022_0_0_6"/>
<dbReference type="Proteomes" id="UP000009182">
    <property type="component" value="Chromosome"/>
</dbReference>
<dbReference type="GO" id="GO:0005829">
    <property type="term" value="C:cytosol"/>
    <property type="evidence" value="ECO:0007669"/>
    <property type="project" value="TreeGrafter"/>
</dbReference>
<dbReference type="GO" id="GO:0019843">
    <property type="term" value="F:rRNA binding"/>
    <property type="evidence" value="ECO:0007669"/>
    <property type="project" value="TreeGrafter"/>
</dbReference>
<dbReference type="GO" id="GO:0030697">
    <property type="term" value="F:tRNA (uracil(54)-C5)-methyltransferase activity, S-adenosyl methionine-dependent"/>
    <property type="evidence" value="ECO:0007669"/>
    <property type="project" value="UniProtKB-UniRule"/>
</dbReference>
<dbReference type="GO" id="GO:0000049">
    <property type="term" value="F:tRNA binding"/>
    <property type="evidence" value="ECO:0007669"/>
    <property type="project" value="TreeGrafter"/>
</dbReference>
<dbReference type="GO" id="GO:0030488">
    <property type="term" value="P:tRNA methylation"/>
    <property type="evidence" value="ECO:0007669"/>
    <property type="project" value="UniProtKB-UniRule"/>
</dbReference>
<dbReference type="CDD" id="cd02440">
    <property type="entry name" value="AdoMet_MTases"/>
    <property type="match status" value="1"/>
</dbReference>
<dbReference type="FunFam" id="2.40.50.1070:FF:000001">
    <property type="entry name" value="tRNA/tmRNA (uracil-C(5))-methyltransferase"/>
    <property type="match status" value="1"/>
</dbReference>
<dbReference type="FunFam" id="3.40.50.150:FF:000012">
    <property type="entry name" value="tRNA/tmRNA (uracil-C(5))-methyltransferase"/>
    <property type="match status" value="1"/>
</dbReference>
<dbReference type="Gene3D" id="2.40.50.1070">
    <property type="match status" value="1"/>
</dbReference>
<dbReference type="Gene3D" id="3.40.50.150">
    <property type="entry name" value="Vaccinia Virus protein VP39"/>
    <property type="match status" value="1"/>
</dbReference>
<dbReference type="HAMAP" id="MF_01011">
    <property type="entry name" value="RNA_methyltr_TrmA"/>
    <property type="match status" value="1"/>
</dbReference>
<dbReference type="InterPro" id="IPR030390">
    <property type="entry name" value="MeTrfase_TrmA_AS"/>
</dbReference>
<dbReference type="InterPro" id="IPR030391">
    <property type="entry name" value="MeTrfase_TrmA_CS"/>
</dbReference>
<dbReference type="InterPro" id="IPR029063">
    <property type="entry name" value="SAM-dependent_MTases_sf"/>
</dbReference>
<dbReference type="InterPro" id="IPR011869">
    <property type="entry name" value="TrmA_MeTrfase"/>
</dbReference>
<dbReference type="InterPro" id="IPR010280">
    <property type="entry name" value="U5_MeTrfase_fam"/>
</dbReference>
<dbReference type="NCBIfam" id="TIGR02143">
    <property type="entry name" value="trmA_only"/>
    <property type="match status" value="1"/>
</dbReference>
<dbReference type="PANTHER" id="PTHR47790">
    <property type="entry name" value="TRNA/TMRNA (URACIL-C(5))-METHYLTRANSFERASE"/>
    <property type="match status" value="1"/>
</dbReference>
<dbReference type="PANTHER" id="PTHR47790:SF2">
    <property type="entry name" value="TRNA_TMRNA (URACIL-C(5))-METHYLTRANSFERASE"/>
    <property type="match status" value="1"/>
</dbReference>
<dbReference type="Pfam" id="PF05958">
    <property type="entry name" value="tRNA_U5-meth_tr"/>
    <property type="match status" value="1"/>
</dbReference>
<dbReference type="SUPFAM" id="SSF53335">
    <property type="entry name" value="S-adenosyl-L-methionine-dependent methyltransferases"/>
    <property type="match status" value="1"/>
</dbReference>
<dbReference type="PROSITE" id="PS51687">
    <property type="entry name" value="SAM_MT_RNA_M5U"/>
    <property type="match status" value="1"/>
</dbReference>
<dbReference type="PROSITE" id="PS01230">
    <property type="entry name" value="TRMA_1"/>
    <property type="match status" value="1"/>
</dbReference>
<dbReference type="PROSITE" id="PS01231">
    <property type="entry name" value="TRMA_2"/>
    <property type="match status" value="1"/>
</dbReference>
<reference key="1">
    <citation type="journal article" date="2006" name="Mol. Microbiol.">
        <title>Role of pathogenicity island-associated integrases in the genome plasticity of uropathogenic Escherichia coli strain 536.</title>
        <authorList>
            <person name="Hochhut B."/>
            <person name="Wilde C."/>
            <person name="Balling G."/>
            <person name="Middendorf B."/>
            <person name="Dobrindt U."/>
            <person name="Brzuszkiewicz E."/>
            <person name="Gottschalk G."/>
            <person name="Carniel E."/>
            <person name="Hacker J."/>
        </authorList>
    </citation>
    <scope>NUCLEOTIDE SEQUENCE [LARGE SCALE GENOMIC DNA]</scope>
    <source>
        <strain>536 / UPEC</strain>
    </source>
</reference>
<organism>
    <name type="scientific">Escherichia coli O6:K15:H31 (strain 536 / UPEC)</name>
    <dbReference type="NCBI Taxonomy" id="362663"/>
    <lineage>
        <taxon>Bacteria</taxon>
        <taxon>Pseudomonadati</taxon>
        <taxon>Pseudomonadota</taxon>
        <taxon>Gammaproteobacteria</taxon>
        <taxon>Enterobacterales</taxon>
        <taxon>Enterobacteriaceae</taxon>
        <taxon>Escherichia</taxon>
    </lineage>
</organism>
<proteinExistence type="inferred from homology"/>
<gene>
    <name evidence="1" type="primary">trmA</name>
    <name type="ordered locus">ECP_4182</name>
</gene>
<sequence length="366" mass="41936">MTPEHLPTEQYEAQLAEKVVRLQSMMAPFSDLVPEVFRSPVSHYRMRAEFRIWHDGDDLYHIIFDQQTKSRIRVDSFPAASELINQLMTAMIAGVRNNPILRHKLFQIDYLTTLSNQAVVSLLYHKKLDDEWRQQAEALRDALRAQNLNVHLIGRATKTKIALDQDYIDERLPIAGKEMIYRQVENSFTQPNAAMNIQMLEWALDVTKGSKGDLLELYCGNGNFSLALARNFDRVLATEIAKPSVAAAQYNIAANHIDNVQIIRMAAEEFTQAMNGVREFNRLQGIDLKSYQCETIFVDPPRSGLDSETEKMVQAYPRILYISCNPETLCKNLETLSQTHKVERLALFDQFPYTHHMECGVLLTAK</sequence>
<protein>
    <recommendedName>
        <fullName evidence="1">tRNA/tmRNA (uracil-C(5))-methyltransferase</fullName>
        <ecNumber evidence="1">2.1.1.-</ecNumber>
        <ecNumber evidence="1">2.1.1.35</ecNumber>
    </recommendedName>
    <alternativeName>
        <fullName evidence="1">tRNA (uracil(54)-C(5))-methyltransferase</fullName>
    </alternativeName>
    <alternativeName>
        <fullName evidence="1">tRNA(m5U54)-methyltransferase</fullName>
        <shortName evidence="1">RUMT</shortName>
    </alternativeName>
    <alternativeName>
        <fullName evidence="1">tmRNA (uracil(341)-C(5))-methyltransferase</fullName>
    </alternativeName>
</protein>
<comment type="function">
    <text evidence="1">Dual-specificity methyltransferase that catalyzes the formation of 5-methyluridine at position 54 (m5U54) in all tRNAs, and that of position 341 (m5U341) in tmRNA (transfer-mRNA).</text>
</comment>
<comment type="catalytic activity">
    <reaction evidence="1">
        <text>uridine(54) in tRNA + S-adenosyl-L-methionine = 5-methyluridine(54) in tRNA + S-adenosyl-L-homocysteine + H(+)</text>
        <dbReference type="Rhea" id="RHEA:42712"/>
        <dbReference type="Rhea" id="RHEA-COMP:10167"/>
        <dbReference type="Rhea" id="RHEA-COMP:10193"/>
        <dbReference type="ChEBI" id="CHEBI:15378"/>
        <dbReference type="ChEBI" id="CHEBI:57856"/>
        <dbReference type="ChEBI" id="CHEBI:59789"/>
        <dbReference type="ChEBI" id="CHEBI:65315"/>
        <dbReference type="ChEBI" id="CHEBI:74447"/>
        <dbReference type="EC" id="2.1.1.35"/>
    </reaction>
</comment>
<comment type="catalytic activity">
    <reaction evidence="1">
        <text>uridine(341) in tmRNA + S-adenosyl-L-methionine = 5-methyluridine(341) in tmRNA + S-adenosyl-L-homocysteine + H(+)</text>
        <dbReference type="Rhea" id="RHEA:43612"/>
        <dbReference type="Rhea" id="RHEA-COMP:10630"/>
        <dbReference type="Rhea" id="RHEA-COMP:10631"/>
        <dbReference type="ChEBI" id="CHEBI:15378"/>
        <dbReference type="ChEBI" id="CHEBI:57856"/>
        <dbReference type="ChEBI" id="CHEBI:59789"/>
        <dbReference type="ChEBI" id="CHEBI:65315"/>
        <dbReference type="ChEBI" id="CHEBI:74447"/>
    </reaction>
</comment>
<comment type="similarity">
    <text evidence="1">Belongs to the class I-like SAM-binding methyltransferase superfamily. RNA M5U methyltransferase family. TrmA subfamily.</text>
</comment>
<name>TRMA_ECOL5</name>